<feature type="chain" id="PRO_0000129144" description="Tol-Pal system protein TolR">
    <location>
        <begin position="1"/>
        <end position="146"/>
    </location>
</feature>
<feature type="transmembrane region" description="Helical" evidence="1">
    <location>
        <begin position="16"/>
        <end position="36"/>
    </location>
</feature>
<protein>
    <recommendedName>
        <fullName evidence="1">Tol-Pal system protein TolR</fullName>
    </recommendedName>
</protein>
<accession>P50599</accession>
<name>TOLR_PSEAE</name>
<organism>
    <name type="scientific">Pseudomonas aeruginosa (strain ATCC 15692 / DSM 22644 / CIP 104116 / JCM 14847 / LMG 12228 / 1C / PRS 101 / PAO1)</name>
    <dbReference type="NCBI Taxonomy" id="208964"/>
    <lineage>
        <taxon>Bacteria</taxon>
        <taxon>Pseudomonadati</taxon>
        <taxon>Pseudomonadota</taxon>
        <taxon>Gammaproteobacteria</taxon>
        <taxon>Pseudomonadales</taxon>
        <taxon>Pseudomonadaceae</taxon>
        <taxon>Pseudomonas</taxon>
    </lineage>
</organism>
<evidence type="ECO:0000255" key="1">
    <source>
        <dbReference type="HAMAP-Rule" id="MF_02203"/>
    </source>
</evidence>
<evidence type="ECO:0000305" key="2"/>
<dbReference type="EMBL" id="U39558">
    <property type="protein sequence ID" value="AAC44659.1"/>
    <property type="molecule type" value="Genomic_DNA"/>
</dbReference>
<dbReference type="EMBL" id="AE004091">
    <property type="protein sequence ID" value="AAG04359.1"/>
    <property type="molecule type" value="Genomic_DNA"/>
</dbReference>
<dbReference type="PIR" id="D83525">
    <property type="entry name" value="D83525"/>
</dbReference>
<dbReference type="RefSeq" id="NP_249661.1">
    <property type="nucleotide sequence ID" value="NC_002516.2"/>
</dbReference>
<dbReference type="RefSeq" id="WP_003086126.1">
    <property type="nucleotide sequence ID" value="NZ_QZGE01000007.1"/>
</dbReference>
<dbReference type="SMR" id="P50599"/>
<dbReference type="FunCoup" id="P50599">
    <property type="interactions" value="250"/>
</dbReference>
<dbReference type="STRING" id="208964.PA0970"/>
<dbReference type="PaxDb" id="208964-PA0970"/>
<dbReference type="DNASU" id="882113"/>
<dbReference type="GeneID" id="77222447"/>
<dbReference type="GeneID" id="882113"/>
<dbReference type="KEGG" id="pae:PA0970"/>
<dbReference type="PATRIC" id="fig|208964.12.peg.1008"/>
<dbReference type="PseudoCAP" id="PA0970"/>
<dbReference type="HOGENOM" id="CLU_085305_1_3_6"/>
<dbReference type="InParanoid" id="P50599"/>
<dbReference type="OrthoDB" id="9798629at2"/>
<dbReference type="PhylomeDB" id="P50599"/>
<dbReference type="BioCyc" id="PAER208964:G1FZ6-991-MONOMER"/>
<dbReference type="Proteomes" id="UP000002438">
    <property type="component" value="Chromosome"/>
</dbReference>
<dbReference type="GO" id="GO:0005886">
    <property type="term" value="C:plasma membrane"/>
    <property type="evidence" value="ECO:0000318"/>
    <property type="project" value="GO_Central"/>
</dbReference>
<dbReference type="GO" id="GO:0022857">
    <property type="term" value="F:transmembrane transporter activity"/>
    <property type="evidence" value="ECO:0007669"/>
    <property type="project" value="InterPro"/>
</dbReference>
<dbReference type="GO" id="GO:0051301">
    <property type="term" value="P:cell division"/>
    <property type="evidence" value="ECO:0007669"/>
    <property type="project" value="UniProtKB-UniRule"/>
</dbReference>
<dbReference type="GO" id="GO:0015031">
    <property type="term" value="P:protein transport"/>
    <property type="evidence" value="ECO:0007669"/>
    <property type="project" value="InterPro"/>
</dbReference>
<dbReference type="Gene3D" id="3.30.420.270">
    <property type="match status" value="1"/>
</dbReference>
<dbReference type="HAMAP" id="MF_02203">
    <property type="entry name" value="TolR"/>
    <property type="match status" value="1"/>
</dbReference>
<dbReference type="InterPro" id="IPR003400">
    <property type="entry name" value="ExbD"/>
</dbReference>
<dbReference type="InterPro" id="IPR014168">
    <property type="entry name" value="Tol-Pal_TolR"/>
</dbReference>
<dbReference type="NCBIfam" id="TIGR02801">
    <property type="entry name" value="tolR"/>
    <property type="match status" value="1"/>
</dbReference>
<dbReference type="PANTHER" id="PTHR30558">
    <property type="entry name" value="EXBD MEMBRANE COMPONENT OF PMF-DRIVEN MACROMOLECULE IMPORT SYSTEM"/>
    <property type="match status" value="1"/>
</dbReference>
<dbReference type="PANTHER" id="PTHR30558:SF7">
    <property type="entry name" value="TOL-PAL SYSTEM PROTEIN TOLR"/>
    <property type="match status" value="1"/>
</dbReference>
<dbReference type="Pfam" id="PF02472">
    <property type="entry name" value="ExbD"/>
    <property type="match status" value="1"/>
</dbReference>
<keyword id="KW-0131">Cell cycle</keyword>
<keyword id="KW-0132">Cell division</keyword>
<keyword id="KW-0997">Cell inner membrane</keyword>
<keyword id="KW-1003">Cell membrane</keyword>
<keyword id="KW-0472">Membrane</keyword>
<keyword id="KW-1185">Reference proteome</keyword>
<keyword id="KW-0812">Transmembrane</keyword>
<keyword id="KW-1133">Transmembrane helix</keyword>
<proteinExistence type="inferred from homology"/>
<gene>
    <name evidence="1" type="primary">tolR</name>
    <name type="ordered locus">PA0970</name>
</gene>
<sequence>MARVRHKRKPVAEMNVVPYIDVMLVLLVIFMVTAPMLNQGVKVDLPKVSSEALPQDNNKQVLTLSVKADGSYYWNVGSEVDTEKQTDSAVSLEQMTDAVTKIMSARPDTQVFIRGDKAVNYGAVVGAMGALQQAGVPNVGLITEAP</sequence>
<comment type="function">
    <text evidence="1">Part of the Tol-Pal system, which plays a role in outer membrane invagination during cell division and is important for maintaining outer membrane integrity.</text>
</comment>
<comment type="subunit">
    <text evidence="1">The Tol-Pal system is composed of five core proteins: the inner membrane proteins TolA, TolQ and TolR, the periplasmic protein TolB and the outer membrane protein Pal. They form a network linking the inner and outer membranes and the peptidoglycan layer.</text>
</comment>
<comment type="subcellular location">
    <subcellularLocation>
        <location evidence="1">Cell inner membrane</location>
        <topology evidence="1">Single-pass membrane protein</topology>
    </subcellularLocation>
</comment>
<comment type="similarity">
    <text evidence="1 2">Belongs to the ExbD/TolR family.</text>
</comment>
<reference key="1">
    <citation type="journal article" date="1996" name="J. Bacteriol.">
        <title>Identification and characterization of the tolQRA genes of Pseudomonas aeruginosa.</title>
        <authorList>
            <person name="Dennis J.J."/>
            <person name="Lafontaine E.R."/>
            <person name="Sokol P.A."/>
        </authorList>
    </citation>
    <scope>NUCLEOTIDE SEQUENCE [GENOMIC DNA]</scope>
    <source>
        <strain>PAO</strain>
    </source>
</reference>
<reference key="2">
    <citation type="journal article" date="2000" name="Nature">
        <title>Complete genome sequence of Pseudomonas aeruginosa PAO1, an opportunistic pathogen.</title>
        <authorList>
            <person name="Stover C.K."/>
            <person name="Pham X.-Q.T."/>
            <person name="Erwin A.L."/>
            <person name="Mizoguchi S.D."/>
            <person name="Warrener P."/>
            <person name="Hickey M.J."/>
            <person name="Brinkman F.S.L."/>
            <person name="Hufnagle W.O."/>
            <person name="Kowalik D.J."/>
            <person name="Lagrou M."/>
            <person name="Garber R.L."/>
            <person name="Goltry L."/>
            <person name="Tolentino E."/>
            <person name="Westbrock-Wadman S."/>
            <person name="Yuan Y."/>
            <person name="Brody L.L."/>
            <person name="Coulter S.N."/>
            <person name="Folger K.R."/>
            <person name="Kas A."/>
            <person name="Larbig K."/>
            <person name="Lim R.M."/>
            <person name="Smith K.A."/>
            <person name="Spencer D.H."/>
            <person name="Wong G.K.-S."/>
            <person name="Wu Z."/>
            <person name="Paulsen I.T."/>
            <person name="Reizer J."/>
            <person name="Saier M.H. Jr."/>
            <person name="Hancock R.E.W."/>
            <person name="Lory S."/>
            <person name="Olson M.V."/>
        </authorList>
    </citation>
    <scope>NUCLEOTIDE SEQUENCE [LARGE SCALE GENOMIC DNA]</scope>
    <source>
        <strain>ATCC 15692 / DSM 22644 / CIP 104116 / JCM 14847 / LMG 12228 / 1C / PRS 101 / PAO1</strain>
    </source>
</reference>